<protein>
    <recommendedName>
        <fullName evidence="1">Probable septum site-determining protein MinC</fullName>
    </recommendedName>
</protein>
<gene>
    <name evidence="1" type="primary">minC</name>
    <name type="ordered locus">ACIAD0895</name>
</gene>
<proteinExistence type="inferred from homology"/>
<accession>Q6FDR5</accession>
<reference key="1">
    <citation type="journal article" date="2004" name="Nucleic Acids Res.">
        <title>Unique features revealed by the genome sequence of Acinetobacter sp. ADP1, a versatile and naturally transformation competent bacterium.</title>
        <authorList>
            <person name="Barbe V."/>
            <person name="Vallenet D."/>
            <person name="Fonknechten N."/>
            <person name="Kreimeyer A."/>
            <person name="Oztas S."/>
            <person name="Labarre L."/>
            <person name="Cruveiller S."/>
            <person name="Robert C."/>
            <person name="Duprat S."/>
            <person name="Wincker P."/>
            <person name="Ornston L.N."/>
            <person name="Weissenbach J."/>
            <person name="Marliere P."/>
            <person name="Cohen G.N."/>
            <person name="Medigue C."/>
        </authorList>
    </citation>
    <scope>NUCLEOTIDE SEQUENCE [LARGE SCALE GENOMIC DNA]</scope>
    <source>
        <strain>ATCC 33305 / BD413 / ADP1</strain>
    </source>
</reference>
<feature type="chain" id="PRO_1000114260" description="Probable septum site-determining protein MinC">
    <location>
        <begin position="1"/>
        <end position="240"/>
    </location>
</feature>
<organism>
    <name type="scientific">Acinetobacter baylyi (strain ATCC 33305 / BD413 / ADP1)</name>
    <dbReference type="NCBI Taxonomy" id="62977"/>
    <lineage>
        <taxon>Bacteria</taxon>
        <taxon>Pseudomonadati</taxon>
        <taxon>Pseudomonadota</taxon>
        <taxon>Gammaproteobacteria</taxon>
        <taxon>Moraxellales</taxon>
        <taxon>Moraxellaceae</taxon>
        <taxon>Acinetobacter</taxon>
    </lineage>
</organism>
<name>MINC_ACIAD</name>
<keyword id="KW-0131">Cell cycle</keyword>
<keyword id="KW-0132">Cell division</keyword>
<keyword id="KW-0717">Septation</keyword>
<sequence length="240" mass="26116">MADIRITGRMVNFTRLTFDTNDHDAIRQQLTSILNEGSYQGTVVILDSTVEQELIALIQLLISLGLQPMAVIDGILSDEAKAIQFPVLPADQPLQRIKASKEEITVIATPKAADTTPETKTPITKTAIAHKTSYHDEILRTGQCLVQDHGDIILNAGMNSGSEVIASGNIHIYGNVRGRIIAGAGGNPSARIFCHALEAELVSIAGTYCVAEDIPKDVLKKSVHIYLNDNQELEFRALEF</sequence>
<comment type="function">
    <text evidence="1">Cell division inhibitor that blocks the formation of polar Z ring septums. Rapidly oscillates between the poles of the cell to destabilize FtsZ filaments that have formed before they mature into polar Z rings. Prevents FtsZ polymerization.</text>
</comment>
<comment type="subunit">
    <text evidence="1">Interacts with MinD and FtsZ.</text>
</comment>
<comment type="similarity">
    <text evidence="1">Belongs to the MinC family.</text>
</comment>
<dbReference type="EMBL" id="CR543861">
    <property type="protein sequence ID" value="CAG67793.1"/>
    <property type="molecule type" value="Genomic_DNA"/>
</dbReference>
<dbReference type="RefSeq" id="WP_004922091.1">
    <property type="nucleotide sequence ID" value="NC_005966.1"/>
</dbReference>
<dbReference type="SMR" id="Q6FDR5"/>
<dbReference type="STRING" id="202950.GCA_001485005_02643"/>
<dbReference type="GeneID" id="45233355"/>
<dbReference type="KEGG" id="aci:ACIAD0895"/>
<dbReference type="eggNOG" id="COG0850">
    <property type="taxonomic scope" value="Bacteria"/>
</dbReference>
<dbReference type="HOGENOM" id="CLU_067812_0_1_6"/>
<dbReference type="OrthoDB" id="9794530at2"/>
<dbReference type="BioCyc" id="ASP62977:ACIAD_RS04135-MONOMER"/>
<dbReference type="Proteomes" id="UP000000430">
    <property type="component" value="Chromosome"/>
</dbReference>
<dbReference type="GO" id="GO:0000902">
    <property type="term" value="P:cell morphogenesis"/>
    <property type="evidence" value="ECO:0007669"/>
    <property type="project" value="InterPro"/>
</dbReference>
<dbReference type="GO" id="GO:0000917">
    <property type="term" value="P:division septum assembly"/>
    <property type="evidence" value="ECO:0007669"/>
    <property type="project" value="UniProtKB-KW"/>
</dbReference>
<dbReference type="GO" id="GO:0051302">
    <property type="term" value="P:regulation of cell division"/>
    <property type="evidence" value="ECO:0007669"/>
    <property type="project" value="InterPro"/>
</dbReference>
<dbReference type="GO" id="GO:1901891">
    <property type="term" value="P:regulation of cell septum assembly"/>
    <property type="evidence" value="ECO:0007669"/>
    <property type="project" value="InterPro"/>
</dbReference>
<dbReference type="Gene3D" id="2.160.20.70">
    <property type="match status" value="1"/>
</dbReference>
<dbReference type="Gene3D" id="3.30.70.260">
    <property type="match status" value="1"/>
</dbReference>
<dbReference type="HAMAP" id="MF_00267">
    <property type="entry name" value="MinC"/>
    <property type="match status" value="1"/>
</dbReference>
<dbReference type="InterPro" id="IPR016098">
    <property type="entry name" value="CAP/MinC_C"/>
</dbReference>
<dbReference type="InterPro" id="IPR013033">
    <property type="entry name" value="MinC"/>
</dbReference>
<dbReference type="InterPro" id="IPR036145">
    <property type="entry name" value="MinC_C_sf"/>
</dbReference>
<dbReference type="InterPro" id="IPR007874">
    <property type="entry name" value="MinC_N"/>
</dbReference>
<dbReference type="InterPro" id="IPR005526">
    <property type="entry name" value="Septum_form_inhib_MinC_C"/>
</dbReference>
<dbReference type="NCBIfam" id="TIGR01222">
    <property type="entry name" value="minC"/>
    <property type="match status" value="1"/>
</dbReference>
<dbReference type="PANTHER" id="PTHR34108">
    <property type="entry name" value="SEPTUM SITE-DETERMINING PROTEIN MINC"/>
    <property type="match status" value="1"/>
</dbReference>
<dbReference type="PANTHER" id="PTHR34108:SF1">
    <property type="entry name" value="SEPTUM SITE-DETERMINING PROTEIN MINC"/>
    <property type="match status" value="1"/>
</dbReference>
<dbReference type="Pfam" id="PF03775">
    <property type="entry name" value="MinC_C"/>
    <property type="match status" value="1"/>
</dbReference>
<dbReference type="Pfam" id="PF05209">
    <property type="entry name" value="MinC_N"/>
    <property type="match status" value="1"/>
</dbReference>
<dbReference type="SUPFAM" id="SSF63848">
    <property type="entry name" value="Cell-division inhibitor MinC, C-terminal domain"/>
    <property type="match status" value="1"/>
</dbReference>
<evidence type="ECO:0000255" key="1">
    <source>
        <dbReference type="HAMAP-Rule" id="MF_00267"/>
    </source>
</evidence>